<comment type="function">
    <text evidence="1">Catalyzes the transfer of the phosphoribosyl group of 5-phosphorylribose-1-pyrophosphate (PRPP) to anthranilate to yield N-(5'-phosphoribosyl)-anthranilate (PRA).</text>
</comment>
<comment type="catalytic activity">
    <reaction evidence="1">
        <text>N-(5-phospho-beta-D-ribosyl)anthranilate + diphosphate = 5-phospho-alpha-D-ribose 1-diphosphate + anthranilate</text>
        <dbReference type="Rhea" id="RHEA:11768"/>
        <dbReference type="ChEBI" id="CHEBI:16567"/>
        <dbReference type="ChEBI" id="CHEBI:18277"/>
        <dbReference type="ChEBI" id="CHEBI:33019"/>
        <dbReference type="ChEBI" id="CHEBI:58017"/>
        <dbReference type="EC" id="2.4.2.18"/>
    </reaction>
</comment>
<comment type="cofactor">
    <cofactor evidence="1">
        <name>Mg(2+)</name>
        <dbReference type="ChEBI" id="CHEBI:18420"/>
    </cofactor>
    <text evidence="1">Binds 2 magnesium ions per monomer.</text>
</comment>
<comment type="pathway">
    <text evidence="1">Amino-acid biosynthesis; L-tryptophan biosynthesis; L-tryptophan from chorismate: step 2/5.</text>
</comment>
<comment type="subunit">
    <text evidence="1">Homodimer.</text>
</comment>
<comment type="similarity">
    <text evidence="1">Belongs to the anthranilate phosphoribosyltransferase family.</text>
</comment>
<feature type="chain" id="PRO_0000154513" description="Anthranilate phosphoribosyltransferase">
    <location>
        <begin position="1"/>
        <end position="339"/>
    </location>
</feature>
<feature type="region of interest" description="Disordered" evidence="2">
    <location>
        <begin position="248"/>
        <end position="271"/>
    </location>
</feature>
<feature type="compositionally biased region" description="Basic and acidic residues" evidence="2">
    <location>
        <begin position="248"/>
        <end position="265"/>
    </location>
</feature>
<feature type="binding site" evidence="1">
    <location>
        <position position="78"/>
    </location>
    <ligand>
        <name>5-phospho-alpha-D-ribose 1-diphosphate</name>
        <dbReference type="ChEBI" id="CHEBI:58017"/>
    </ligand>
</feature>
<feature type="binding site" evidence="1">
    <location>
        <position position="78"/>
    </location>
    <ligand>
        <name>anthranilate</name>
        <dbReference type="ChEBI" id="CHEBI:16567"/>
        <label>1</label>
    </ligand>
</feature>
<feature type="binding site" evidence="1">
    <location>
        <begin position="81"/>
        <end position="82"/>
    </location>
    <ligand>
        <name>5-phospho-alpha-D-ribose 1-diphosphate</name>
        <dbReference type="ChEBI" id="CHEBI:58017"/>
    </ligand>
</feature>
<feature type="binding site" evidence="1">
    <location>
        <position position="86"/>
    </location>
    <ligand>
        <name>5-phospho-alpha-D-ribose 1-diphosphate</name>
        <dbReference type="ChEBI" id="CHEBI:58017"/>
    </ligand>
</feature>
<feature type="binding site" evidence="1">
    <location>
        <begin position="88"/>
        <end position="91"/>
    </location>
    <ligand>
        <name>5-phospho-alpha-D-ribose 1-diphosphate</name>
        <dbReference type="ChEBI" id="CHEBI:58017"/>
    </ligand>
</feature>
<feature type="binding site" evidence="1">
    <location>
        <position position="90"/>
    </location>
    <ligand>
        <name>Mg(2+)</name>
        <dbReference type="ChEBI" id="CHEBI:18420"/>
        <label>1</label>
    </ligand>
</feature>
<feature type="binding site" evidence="1">
    <location>
        <begin position="106"/>
        <end position="114"/>
    </location>
    <ligand>
        <name>5-phospho-alpha-D-ribose 1-diphosphate</name>
        <dbReference type="ChEBI" id="CHEBI:58017"/>
    </ligand>
</feature>
<feature type="binding site" evidence="1">
    <location>
        <position position="109"/>
    </location>
    <ligand>
        <name>anthranilate</name>
        <dbReference type="ChEBI" id="CHEBI:16567"/>
        <label>1</label>
    </ligand>
</feature>
<feature type="binding site" evidence="1">
    <location>
        <position position="118"/>
    </location>
    <ligand>
        <name>5-phospho-alpha-D-ribose 1-diphosphate</name>
        <dbReference type="ChEBI" id="CHEBI:58017"/>
    </ligand>
</feature>
<feature type="binding site" evidence="1">
    <location>
        <position position="164"/>
    </location>
    <ligand>
        <name>anthranilate</name>
        <dbReference type="ChEBI" id="CHEBI:16567"/>
        <label>2</label>
    </ligand>
</feature>
<feature type="binding site" evidence="1">
    <location>
        <position position="225"/>
    </location>
    <ligand>
        <name>Mg(2+)</name>
        <dbReference type="ChEBI" id="CHEBI:18420"/>
        <label>2</label>
    </ligand>
</feature>
<feature type="binding site" evidence="1">
    <location>
        <position position="226"/>
    </location>
    <ligand>
        <name>Mg(2+)</name>
        <dbReference type="ChEBI" id="CHEBI:18420"/>
        <label>1</label>
    </ligand>
</feature>
<feature type="binding site" evidence="1">
    <location>
        <position position="226"/>
    </location>
    <ligand>
        <name>Mg(2+)</name>
        <dbReference type="ChEBI" id="CHEBI:18420"/>
        <label>2</label>
    </ligand>
</feature>
<accession>Q8TXJ5</accession>
<protein>
    <recommendedName>
        <fullName evidence="1">Anthranilate phosphoribosyltransferase</fullName>
        <ecNumber evidence="1">2.4.2.18</ecNumber>
    </recommendedName>
</protein>
<dbReference type="EC" id="2.4.2.18" evidence="1"/>
<dbReference type="EMBL" id="AE009439">
    <property type="protein sequence ID" value="AAM01893.1"/>
    <property type="molecule type" value="Genomic_DNA"/>
</dbReference>
<dbReference type="RefSeq" id="WP_011019048.1">
    <property type="nucleotide sequence ID" value="NC_003551.1"/>
</dbReference>
<dbReference type="SMR" id="Q8TXJ5"/>
<dbReference type="FunCoup" id="Q8TXJ5">
    <property type="interactions" value="111"/>
</dbReference>
<dbReference type="STRING" id="190192.MK0678"/>
<dbReference type="PaxDb" id="190192-MK0678"/>
<dbReference type="EnsemblBacteria" id="AAM01893">
    <property type="protein sequence ID" value="AAM01893"/>
    <property type="gene ID" value="MK0678"/>
</dbReference>
<dbReference type="GeneID" id="1476779"/>
<dbReference type="KEGG" id="mka:MK0678"/>
<dbReference type="PATRIC" id="fig|190192.8.peg.717"/>
<dbReference type="HOGENOM" id="CLU_034315_2_1_2"/>
<dbReference type="InParanoid" id="Q8TXJ5"/>
<dbReference type="OrthoDB" id="8214at2157"/>
<dbReference type="UniPathway" id="UPA00035">
    <property type="reaction ID" value="UER00041"/>
</dbReference>
<dbReference type="Proteomes" id="UP000001826">
    <property type="component" value="Chromosome"/>
</dbReference>
<dbReference type="GO" id="GO:0005829">
    <property type="term" value="C:cytosol"/>
    <property type="evidence" value="ECO:0007669"/>
    <property type="project" value="TreeGrafter"/>
</dbReference>
<dbReference type="GO" id="GO:0004048">
    <property type="term" value="F:anthranilate phosphoribosyltransferase activity"/>
    <property type="evidence" value="ECO:0007669"/>
    <property type="project" value="UniProtKB-UniRule"/>
</dbReference>
<dbReference type="GO" id="GO:0000287">
    <property type="term" value="F:magnesium ion binding"/>
    <property type="evidence" value="ECO:0007669"/>
    <property type="project" value="UniProtKB-UniRule"/>
</dbReference>
<dbReference type="GO" id="GO:0000162">
    <property type="term" value="P:L-tryptophan biosynthetic process"/>
    <property type="evidence" value="ECO:0007669"/>
    <property type="project" value="UniProtKB-UniRule"/>
</dbReference>
<dbReference type="FunFam" id="3.40.1030.10:FF:000002">
    <property type="entry name" value="Anthranilate phosphoribosyltransferase"/>
    <property type="match status" value="1"/>
</dbReference>
<dbReference type="Gene3D" id="3.40.1030.10">
    <property type="entry name" value="Nucleoside phosphorylase/phosphoribosyltransferase catalytic domain"/>
    <property type="match status" value="1"/>
</dbReference>
<dbReference type="Gene3D" id="1.20.970.10">
    <property type="entry name" value="Transferase, Pyrimidine Nucleoside Phosphorylase, Chain C"/>
    <property type="match status" value="1"/>
</dbReference>
<dbReference type="HAMAP" id="MF_00211">
    <property type="entry name" value="TrpD"/>
    <property type="match status" value="1"/>
</dbReference>
<dbReference type="InterPro" id="IPR005940">
    <property type="entry name" value="Anthranilate_Pribosyl_Tfrase"/>
</dbReference>
<dbReference type="InterPro" id="IPR000312">
    <property type="entry name" value="Glycosyl_Trfase_fam3"/>
</dbReference>
<dbReference type="InterPro" id="IPR017459">
    <property type="entry name" value="Glycosyl_Trfase_fam3_N_dom"/>
</dbReference>
<dbReference type="InterPro" id="IPR036320">
    <property type="entry name" value="Glycosyl_Trfase_fam3_N_dom_sf"/>
</dbReference>
<dbReference type="InterPro" id="IPR035902">
    <property type="entry name" value="Nuc_phospho_transferase"/>
</dbReference>
<dbReference type="NCBIfam" id="TIGR01245">
    <property type="entry name" value="trpD"/>
    <property type="match status" value="1"/>
</dbReference>
<dbReference type="PANTHER" id="PTHR43285">
    <property type="entry name" value="ANTHRANILATE PHOSPHORIBOSYLTRANSFERASE"/>
    <property type="match status" value="1"/>
</dbReference>
<dbReference type="PANTHER" id="PTHR43285:SF2">
    <property type="entry name" value="ANTHRANILATE PHOSPHORIBOSYLTRANSFERASE"/>
    <property type="match status" value="1"/>
</dbReference>
<dbReference type="Pfam" id="PF02885">
    <property type="entry name" value="Glycos_trans_3N"/>
    <property type="match status" value="1"/>
</dbReference>
<dbReference type="Pfam" id="PF00591">
    <property type="entry name" value="Glycos_transf_3"/>
    <property type="match status" value="1"/>
</dbReference>
<dbReference type="SUPFAM" id="SSF52418">
    <property type="entry name" value="Nucleoside phosphorylase/phosphoribosyltransferase catalytic domain"/>
    <property type="match status" value="1"/>
</dbReference>
<dbReference type="SUPFAM" id="SSF47648">
    <property type="entry name" value="Nucleoside phosphorylase/phosphoribosyltransferase N-terminal domain"/>
    <property type="match status" value="1"/>
</dbReference>
<name>TRPD_METKA</name>
<reference key="1">
    <citation type="journal article" date="2002" name="Proc. Natl. Acad. Sci. U.S.A.">
        <title>The complete genome of hyperthermophile Methanopyrus kandleri AV19 and monophyly of archaeal methanogens.</title>
        <authorList>
            <person name="Slesarev A.I."/>
            <person name="Mezhevaya K.V."/>
            <person name="Makarova K.S."/>
            <person name="Polushin N.N."/>
            <person name="Shcherbinina O.V."/>
            <person name="Shakhova V.V."/>
            <person name="Belova G.I."/>
            <person name="Aravind L."/>
            <person name="Natale D.A."/>
            <person name="Rogozin I.B."/>
            <person name="Tatusov R.L."/>
            <person name="Wolf Y.I."/>
            <person name="Stetter K.O."/>
            <person name="Malykh A.G."/>
            <person name="Koonin E.V."/>
            <person name="Kozyavkin S.A."/>
        </authorList>
    </citation>
    <scope>NUCLEOTIDE SEQUENCE [LARGE SCALE GENOMIC DNA]</scope>
    <source>
        <strain>AV19 / DSM 6324 / JCM 9639 / NBRC 100938</strain>
    </source>
</reference>
<gene>
    <name evidence="1" type="primary">trpD</name>
    <name type="ordered locus">MK0678</name>
</gene>
<evidence type="ECO:0000255" key="1">
    <source>
        <dbReference type="HAMAP-Rule" id="MF_00211"/>
    </source>
</evidence>
<evidence type="ECO:0000256" key="2">
    <source>
        <dbReference type="SAM" id="MobiDB-lite"/>
    </source>
</evidence>
<organism>
    <name type="scientific">Methanopyrus kandleri (strain AV19 / DSM 6324 / JCM 9639 / NBRC 100938)</name>
    <dbReference type="NCBI Taxonomy" id="190192"/>
    <lineage>
        <taxon>Archaea</taxon>
        <taxon>Methanobacteriati</taxon>
        <taxon>Methanobacteriota</taxon>
        <taxon>Methanomada group</taxon>
        <taxon>Methanopyri</taxon>
        <taxon>Methanopyrales</taxon>
        <taxon>Methanopyraceae</taxon>
        <taxon>Methanopyrus</taxon>
    </lineage>
</organism>
<sequence>MSVLERIIRGSDLDREEARDLMCRIVGGELSDVEVAGILVALRCKGYTSEELVGFVDGMMEHAVKVDPDVERLVDTAGTGGDELDTFNASTLAGLTAAAAGVPVAKHGNRSVTSECGSADILEALGVNIEADPDTVKRCIEEVGFGFMFAPKFHPAMKNVMPVRRKLGIRTVFNVLGPLTNPARERVTGQVIGVYSENLLDLVAGALAELGVRRGLVVYGLDGVDELSVTCENEVVYVDDGEVTDRDTVAPEDVGLDRADPKDVAGADPETSAEEARKILGGELPVDHPKVQMTAFNAGAALYVGEAVDSLEKGIQRALDVLEEGRALEVLEKVVDLSS</sequence>
<keyword id="KW-0028">Amino-acid biosynthesis</keyword>
<keyword id="KW-0057">Aromatic amino acid biosynthesis</keyword>
<keyword id="KW-0328">Glycosyltransferase</keyword>
<keyword id="KW-0460">Magnesium</keyword>
<keyword id="KW-0479">Metal-binding</keyword>
<keyword id="KW-1185">Reference proteome</keyword>
<keyword id="KW-0808">Transferase</keyword>
<keyword id="KW-0822">Tryptophan biosynthesis</keyword>
<proteinExistence type="inferred from homology"/>